<evidence type="ECO:0000255" key="1">
    <source>
        <dbReference type="HAMAP-Rule" id="MF_01817"/>
    </source>
</evidence>
<evidence type="ECO:0000255" key="2">
    <source>
        <dbReference type="PROSITE-ProRule" id="PRU01246"/>
    </source>
</evidence>
<evidence type="ECO:0000255" key="3">
    <source>
        <dbReference type="PROSITE-ProRule" id="PRU01248"/>
    </source>
</evidence>
<evidence type="ECO:0000305" key="4"/>
<feature type="chain" id="PRO_0000355193" description="Tyrosine recombinase XerD-like">
    <location>
        <begin position="1"/>
        <end position="244"/>
    </location>
</feature>
<feature type="domain" description="Core-binding (CB)" evidence="3">
    <location>
        <begin position="1"/>
        <end position="73"/>
    </location>
</feature>
<feature type="domain" description="Tyr recombinase" evidence="2">
    <location>
        <begin position="90"/>
        <end position="244"/>
    </location>
</feature>
<feature type="active site" evidence="2">
    <location>
        <position position="150"/>
    </location>
</feature>
<feature type="active site" evidence="2">
    <location>
        <position position="211"/>
    </location>
</feature>
<feature type="active site" description="O-(3'-phospho-DNA)-tyrosine intermediate" evidence="2">
    <location>
        <position position="243"/>
    </location>
</feature>
<dbReference type="EMBL" id="CP000410">
    <property type="protein sequence ID" value="ABJ55336.1"/>
    <property type="status" value="ALT_INIT"/>
    <property type="molecule type" value="Genomic_DNA"/>
</dbReference>
<dbReference type="SMR" id="Q04IT1"/>
<dbReference type="PaxDb" id="373153-SPD_1657"/>
<dbReference type="KEGG" id="spd:SPD_1657"/>
<dbReference type="eggNOG" id="COG4974">
    <property type="taxonomic scope" value="Bacteria"/>
</dbReference>
<dbReference type="HOGENOM" id="CLU_1128554_0_0_9"/>
<dbReference type="Proteomes" id="UP000001452">
    <property type="component" value="Chromosome"/>
</dbReference>
<dbReference type="GO" id="GO:0005737">
    <property type="term" value="C:cytoplasm"/>
    <property type="evidence" value="ECO:0007669"/>
    <property type="project" value="UniProtKB-SubCell"/>
</dbReference>
<dbReference type="GO" id="GO:0003677">
    <property type="term" value="F:DNA binding"/>
    <property type="evidence" value="ECO:0007669"/>
    <property type="project" value="UniProtKB-KW"/>
</dbReference>
<dbReference type="GO" id="GO:0009037">
    <property type="term" value="F:tyrosine-based site-specific recombinase activity"/>
    <property type="evidence" value="ECO:0007669"/>
    <property type="project" value="UniProtKB-UniRule"/>
</dbReference>
<dbReference type="GO" id="GO:0006313">
    <property type="term" value="P:DNA transposition"/>
    <property type="evidence" value="ECO:0007669"/>
    <property type="project" value="UniProtKB-UniRule"/>
</dbReference>
<dbReference type="CDD" id="cd01190">
    <property type="entry name" value="INT_StrepXerD_C_like"/>
    <property type="match status" value="1"/>
</dbReference>
<dbReference type="Gene3D" id="1.10.150.130">
    <property type="match status" value="1"/>
</dbReference>
<dbReference type="Gene3D" id="1.10.443.10">
    <property type="entry name" value="Intergrase catalytic core"/>
    <property type="match status" value="1"/>
</dbReference>
<dbReference type="HAMAP" id="MF_01817">
    <property type="entry name" value="Recomb_XerD_like"/>
    <property type="match status" value="1"/>
</dbReference>
<dbReference type="InterPro" id="IPR044068">
    <property type="entry name" value="CB"/>
</dbReference>
<dbReference type="InterPro" id="IPR011010">
    <property type="entry name" value="DNA_brk_join_enz"/>
</dbReference>
<dbReference type="InterPro" id="IPR013762">
    <property type="entry name" value="Integrase-like_cat_sf"/>
</dbReference>
<dbReference type="InterPro" id="IPR002104">
    <property type="entry name" value="Integrase_catalytic"/>
</dbReference>
<dbReference type="InterPro" id="IPR010998">
    <property type="entry name" value="Integrase_recombinase_N"/>
</dbReference>
<dbReference type="InterPro" id="IPR004107">
    <property type="entry name" value="Integrase_SAM-like_N"/>
</dbReference>
<dbReference type="InterPro" id="IPR020876">
    <property type="entry name" value="Tyrosine_recombinase_XerD-like"/>
</dbReference>
<dbReference type="NCBIfam" id="NF002685">
    <property type="entry name" value="PRK02436.1"/>
    <property type="match status" value="1"/>
</dbReference>
<dbReference type="Pfam" id="PF02899">
    <property type="entry name" value="Phage_int_SAM_1"/>
    <property type="match status" value="1"/>
</dbReference>
<dbReference type="Pfam" id="PF00589">
    <property type="entry name" value="Phage_integrase"/>
    <property type="match status" value="1"/>
</dbReference>
<dbReference type="SUPFAM" id="SSF56349">
    <property type="entry name" value="DNA breaking-rejoining enzymes"/>
    <property type="match status" value="1"/>
</dbReference>
<dbReference type="PROSITE" id="PS51900">
    <property type="entry name" value="CB"/>
    <property type="match status" value="1"/>
</dbReference>
<dbReference type="PROSITE" id="PS51898">
    <property type="entry name" value="TYR_RECOMBINASE"/>
    <property type="match status" value="1"/>
</dbReference>
<organism>
    <name type="scientific">Streptococcus pneumoniae serotype 2 (strain D39 / NCTC 7466)</name>
    <dbReference type="NCBI Taxonomy" id="373153"/>
    <lineage>
        <taxon>Bacteria</taxon>
        <taxon>Bacillati</taxon>
        <taxon>Bacillota</taxon>
        <taxon>Bacilli</taxon>
        <taxon>Lactobacillales</taxon>
        <taxon>Streptococcaceae</taxon>
        <taxon>Streptococcus</taxon>
    </lineage>
</organism>
<accession>Q04IT1</accession>
<proteinExistence type="inferred from homology"/>
<name>XERDL_STRP2</name>
<sequence length="244" mass="28473">MRDRISAFLEEKQGLSVNSKQSYKYDLEQFLDMVGERISETSLKIYQAQLANLKISAQKRKISACNQFLYFLYQKGEVDSFYRLELAKQAEKKTEKPEILYLDSFWQESDHPEGRLLALLILEMGLLPSEILAIKVADINLDFQVLRISKASQQRIVTIPTALLSELEPLMGQTYLFERGEKPYSRQWAFRQLESFVKEKGFPSLSAQVLREQFILRQIENKVDLYEIAKKLGLKTVLTLEKYR</sequence>
<keyword id="KW-0963">Cytoplasm</keyword>
<keyword id="KW-0229">DNA integration</keyword>
<keyword id="KW-0233">DNA recombination</keyword>
<keyword id="KW-0238">DNA-binding</keyword>
<keyword id="KW-1185">Reference proteome</keyword>
<reference key="1">
    <citation type="journal article" date="2007" name="J. Bacteriol.">
        <title>Genome sequence of Avery's virulent serotype 2 strain D39 of Streptococcus pneumoniae and comparison with that of unencapsulated laboratory strain R6.</title>
        <authorList>
            <person name="Lanie J.A."/>
            <person name="Ng W.-L."/>
            <person name="Kazmierczak K.M."/>
            <person name="Andrzejewski T.M."/>
            <person name="Davidsen T.M."/>
            <person name="Wayne K.J."/>
            <person name="Tettelin H."/>
            <person name="Glass J.I."/>
            <person name="Winkler M.E."/>
        </authorList>
    </citation>
    <scope>NUCLEOTIDE SEQUENCE [LARGE SCALE GENOMIC DNA]</scope>
    <source>
        <strain>D39 / NCTC 7466</strain>
    </source>
</reference>
<protein>
    <recommendedName>
        <fullName evidence="1">Tyrosine recombinase XerD-like</fullName>
    </recommendedName>
</protein>
<comment type="function">
    <text evidence="1">Putative tyrosine recombinase. Not involved in the cutting and rejoining of the recombining DNA molecules on dif(SL) site.</text>
</comment>
<comment type="subcellular location">
    <subcellularLocation>
        <location evidence="1">Cytoplasm</location>
    </subcellularLocation>
</comment>
<comment type="similarity">
    <text evidence="1">Belongs to the 'phage' integrase family. XerD-like subfamily.</text>
</comment>
<comment type="sequence caution" evidence="4">
    <conflict type="erroneous initiation">
        <sequence resource="EMBL-CDS" id="ABJ55336"/>
    </conflict>
</comment>
<gene>
    <name type="ordered locus">SPD_1657</name>
</gene>